<protein>
    <recommendedName>
        <fullName evidence="1">Protein-methionine-sulfoxide reductase heme-binding subunit MsrQ</fullName>
    </recommendedName>
    <alternativeName>
        <fullName evidence="1">Flavocytochrome MsrQ</fullName>
    </alternativeName>
</protein>
<dbReference type="EMBL" id="AM933173">
    <property type="protein sequence ID" value="CAR39066.1"/>
    <property type="molecule type" value="Genomic_DNA"/>
</dbReference>
<dbReference type="RefSeq" id="WP_001240053.1">
    <property type="nucleotide sequence ID" value="NC_011274.1"/>
</dbReference>
<dbReference type="SMR" id="B5REX6"/>
<dbReference type="KEGG" id="seg:SG3269"/>
<dbReference type="HOGENOM" id="CLU_080662_1_0_6"/>
<dbReference type="Proteomes" id="UP000008321">
    <property type="component" value="Chromosome"/>
</dbReference>
<dbReference type="GO" id="GO:0005886">
    <property type="term" value="C:plasma membrane"/>
    <property type="evidence" value="ECO:0007669"/>
    <property type="project" value="UniProtKB-SubCell"/>
</dbReference>
<dbReference type="GO" id="GO:0009055">
    <property type="term" value="F:electron transfer activity"/>
    <property type="evidence" value="ECO:0007669"/>
    <property type="project" value="UniProtKB-UniRule"/>
</dbReference>
<dbReference type="GO" id="GO:0010181">
    <property type="term" value="F:FMN binding"/>
    <property type="evidence" value="ECO:0007669"/>
    <property type="project" value="UniProtKB-UniRule"/>
</dbReference>
<dbReference type="GO" id="GO:0020037">
    <property type="term" value="F:heme binding"/>
    <property type="evidence" value="ECO:0007669"/>
    <property type="project" value="UniProtKB-UniRule"/>
</dbReference>
<dbReference type="GO" id="GO:0046872">
    <property type="term" value="F:metal ion binding"/>
    <property type="evidence" value="ECO:0007669"/>
    <property type="project" value="UniProtKB-KW"/>
</dbReference>
<dbReference type="GO" id="GO:0016679">
    <property type="term" value="F:oxidoreductase activity, acting on diphenols and related substances as donors"/>
    <property type="evidence" value="ECO:0007669"/>
    <property type="project" value="TreeGrafter"/>
</dbReference>
<dbReference type="GO" id="GO:0030091">
    <property type="term" value="P:protein repair"/>
    <property type="evidence" value="ECO:0007669"/>
    <property type="project" value="UniProtKB-UniRule"/>
</dbReference>
<dbReference type="HAMAP" id="MF_01207">
    <property type="entry name" value="MsrQ"/>
    <property type="match status" value="1"/>
</dbReference>
<dbReference type="InterPro" id="IPR013130">
    <property type="entry name" value="Fe3_Rdtase_TM_dom"/>
</dbReference>
<dbReference type="InterPro" id="IPR022837">
    <property type="entry name" value="MsrQ-like"/>
</dbReference>
<dbReference type="NCBIfam" id="NF003831">
    <property type="entry name" value="PRK05419.1-2"/>
    <property type="match status" value="1"/>
</dbReference>
<dbReference type="NCBIfam" id="NF003832">
    <property type="entry name" value="PRK05419.1-4"/>
    <property type="match status" value="1"/>
</dbReference>
<dbReference type="PANTHER" id="PTHR36964">
    <property type="entry name" value="PROTEIN-METHIONINE-SULFOXIDE REDUCTASE HEME-BINDING SUBUNIT MSRQ"/>
    <property type="match status" value="1"/>
</dbReference>
<dbReference type="PANTHER" id="PTHR36964:SF1">
    <property type="entry name" value="PROTEIN-METHIONINE-SULFOXIDE REDUCTASE HEME-BINDING SUBUNIT MSRQ"/>
    <property type="match status" value="1"/>
</dbReference>
<dbReference type="Pfam" id="PF01794">
    <property type="entry name" value="Ferric_reduct"/>
    <property type="match status" value="1"/>
</dbReference>
<sequence>MRLTAKQITWLKVCLHLAGFLPLLWLFWAINHGGLSADPVKDIQHFTGRTALKFLLATLLVSPLARYAKQPLLIRTRRLLGLWCFVWATLHLTSYALLELGIHNLALLGSELISRPYLTLGIISWLVLLALTLTSTQFAQRKLGKRWQTLHNVVYLVAILAPIHYLWSVKILSPQPVIYAALALALLALRYRKFRQWWR</sequence>
<name>MSRQ_SALG2</name>
<proteinExistence type="inferred from homology"/>
<comment type="function">
    <text evidence="1">Part of the MsrPQ system that repairs oxidized periplasmic proteins containing methionine sulfoxide residues (Met-O), using respiratory chain electrons. Thus protects these proteins from oxidative-stress damage caused by reactive species of oxygen and chlorine generated by the host defense mechanisms. MsrPQ is essential for the maintenance of envelope integrity under bleach stress, rescuing a wide series of structurally unrelated periplasmic proteins from methionine oxidation, including the primary periplasmic chaperone SurA and the lipoprotein Pal. MsrQ provides electrons for reduction to the reductase catalytic subunit MsrP, using the quinone pool of the respiratory chain.</text>
</comment>
<comment type="cofactor">
    <cofactor evidence="1">
        <name>FMN</name>
        <dbReference type="ChEBI" id="CHEBI:58210"/>
    </cofactor>
    <text evidence="1">Binds 1 FMN per subunit.</text>
</comment>
<comment type="cofactor">
    <cofactor evidence="1">
        <name>heme b</name>
        <dbReference type="ChEBI" id="CHEBI:60344"/>
    </cofactor>
    <text evidence="1">Binds 1 heme b (iron(II)-protoporphyrin IX) group per subunit.</text>
</comment>
<comment type="subunit">
    <text evidence="1">Heterodimer of a catalytic subunit (MsrP) and a heme-binding subunit (MsrQ).</text>
</comment>
<comment type="subcellular location">
    <subcellularLocation>
        <location evidence="1">Cell inner membrane</location>
        <topology evidence="1">Multi-pass membrane protein</topology>
    </subcellularLocation>
</comment>
<comment type="similarity">
    <text evidence="1">Belongs to the MsrQ family.</text>
</comment>
<gene>
    <name evidence="1" type="primary">msrQ</name>
    <name type="ordered locus">SG3269</name>
</gene>
<organism>
    <name type="scientific">Salmonella gallinarum (strain 287/91 / NCTC 13346)</name>
    <dbReference type="NCBI Taxonomy" id="550538"/>
    <lineage>
        <taxon>Bacteria</taxon>
        <taxon>Pseudomonadati</taxon>
        <taxon>Pseudomonadota</taxon>
        <taxon>Gammaproteobacteria</taxon>
        <taxon>Enterobacterales</taxon>
        <taxon>Enterobacteriaceae</taxon>
        <taxon>Salmonella</taxon>
    </lineage>
</organism>
<feature type="chain" id="PRO_1000138743" description="Protein-methionine-sulfoxide reductase heme-binding subunit MsrQ">
    <location>
        <begin position="1"/>
        <end position="199"/>
    </location>
</feature>
<feature type="transmembrane region" description="Helical" evidence="1">
    <location>
        <begin position="10"/>
        <end position="30"/>
    </location>
</feature>
<feature type="transmembrane region" description="Helical" evidence="1">
    <location>
        <begin position="82"/>
        <end position="102"/>
    </location>
</feature>
<feature type="transmembrane region" description="Helical" evidence="1">
    <location>
        <begin position="116"/>
        <end position="136"/>
    </location>
</feature>
<feature type="transmembrane region" description="Helical" evidence="1">
    <location>
        <begin position="153"/>
        <end position="173"/>
    </location>
</feature>
<evidence type="ECO:0000255" key="1">
    <source>
        <dbReference type="HAMAP-Rule" id="MF_01207"/>
    </source>
</evidence>
<reference key="1">
    <citation type="journal article" date="2008" name="Genome Res.">
        <title>Comparative genome analysis of Salmonella enteritidis PT4 and Salmonella gallinarum 287/91 provides insights into evolutionary and host adaptation pathways.</title>
        <authorList>
            <person name="Thomson N.R."/>
            <person name="Clayton D.J."/>
            <person name="Windhorst D."/>
            <person name="Vernikos G."/>
            <person name="Davidson S."/>
            <person name="Churcher C."/>
            <person name="Quail M.A."/>
            <person name="Stevens M."/>
            <person name="Jones M.A."/>
            <person name="Watson M."/>
            <person name="Barron A."/>
            <person name="Layton A."/>
            <person name="Pickard D."/>
            <person name="Kingsley R.A."/>
            <person name="Bignell A."/>
            <person name="Clark L."/>
            <person name="Harris B."/>
            <person name="Ormond D."/>
            <person name="Abdellah Z."/>
            <person name="Brooks K."/>
            <person name="Cherevach I."/>
            <person name="Chillingworth T."/>
            <person name="Woodward J."/>
            <person name="Norberczak H."/>
            <person name="Lord A."/>
            <person name="Arrowsmith C."/>
            <person name="Jagels K."/>
            <person name="Moule S."/>
            <person name="Mungall K."/>
            <person name="Saunders M."/>
            <person name="Whitehead S."/>
            <person name="Chabalgoity J.A."/>
            <person name="Maskell D."/>
            <person name="Humphreys T."/>
            <person name="Roberts M."/>
            <person name="Barrow P.A."/>
            <person name="Dougan G."/>
            <person name="Parkhill J."/>
        </authorList>
    </citation>
    <scope>NUCLEOTIDE SEQUENCE [LARGE SCALE GENOMIC DNA]</scope>
    <source>
        <strain>287/91 / NCTC 13346</strain>
    </source>
</reference>
<accession>B5REX6</accession>
<keyword id="KW-0997">Cell inner membrane</keyword>
<keyword id="KW-1003">Cell membrane</keyword>
<keyword id="KW-0249">Electron transport</keyword>
<keyword id="KW-0285">Flavoprotein</keyword>
<keyword id="KW-0288">FMN</keyword>
<keyword id="KW-0349">Heme</keyword>
<keyword id="KW-0408">Iron</keyword>
<keyword id="KW-0472">Membrane</keyword>
<keyword id="KW-0479">Metal-binding</keyword>
<keyword id="KW-0812">Transmembrane</keyword>
<keyword id="KW-1133">Transmembrane helix</keyword>
<keyword id="KW-0813">Transport</keyword>